<evidence type="ECO:0000255" key="1">
    <source>
        <dbReference type="HAMAP-Rule" id="MF_00120"/>
    </source>
</evidence>
<name>GATA_FRATN</name>
<dbReference type="EC" id="6.3.5.7" evidence="1"/>
<dbReference type="EMBL" id="CP000439">
    <property type="protein sequence ID" value="ABK90547.1"/>
    <property type="molecule type" value="Genomic_DNA"/>
</dbReference>
<dbReference type="RefSeq" id="WP_003041342.1">
    <property type="nucleotide sequence ID" value="NC_008601.1"/>
</dbReference>
<dbReference type="SMR" id="A0Q8I2"/>
<dbReference type="KEGG" id="ftn:FTN_1690"/>
<dbReference type="KEGG" id="ftx:AW25_298"/>
<dbReference type="BioCyc" id="FTUL401614:G1G75-1750-MONOMER"/>
<dbReference type="Proteomes" id="UP000000762">
    <property type="component" value="Chromosome"/>
</dbReference>
<dbReference type="GO" id="GO:0030956">
    <property type="term" value="C:glutamyl-tRNA(Gln) amidotransferase complex"/>
    <property type="evidence" value="ECO:0007669"/>
    <property type="project" value="InterPro"/>
</dbReference>
<dbReference type="GO" id="GO:0005524">
    <property type="term" value="F:ATP binding"/>
    <property type="evidence" value="ECO:0007669"/>
    <property type="project" value="UniProtKB-KW"/>
</dbReference>
<dbReference type="GO" id="GO:0050567">
    <property type="term" value="F:glutaminyl-tRNA synthase (glutamine-hydrolyzing) activity"/>
    <property type="evidence" value="ECO:0007669"/>
    <property type="project" value="UniProtKB-UniRule"/>
</dbReference>
<dbReference type="GO" id="GO:0006412">
    <property type="term" value="P:translation"/>
    <property type="evidence" value="ECO:0007669"/>
    <property type="project" value="UniProtKB-UniRule"/>
</dbReference>
<dbReference type="Gene3D" id="3.90.1300.10">
    <property type="entry name" value="Amidase signature (AS) domain"/>
    <property type="match status" value="1"/>
</dbReference>
<dbReference type="HAMAP" id="MF_00120">
    <property type="entry name" value="GatA"/>
    <property type="match status" value="1"/>
</dbReference>
<dbReference type="InterPro" id="IPR000120">
    <property type="entry name" value="Amidase"/>
</dbReference>
<dbReference type="InterPro" id="IPR020556">
    <property type="entry name" value="Amidase_CS"/>
</dbReference>
<dbReference type="InterPro" id="IPR023631">
    <property type="entry name" value="Amidase_dom"/>
</dbReference>
<dbReference type="InterPro" id="IPR036928">
    <property type="entry name" value="AS_sf"/>
</dbReference>
<dbReference type="InterPro" id="IPR004412">
    <property type="entry name" value="GatA"/>
</dbReference>
<dbReference type="NCBIfam" id="TIGR00132">
    <property type="entry name" value="gatA"/>
    <property type="match status" value="1"/>
</dbReference>
<dbReference type="PANTHER" id="PTHR11895:SF151">
    <property type="entry name" value="GLUTAMYL-TRNA(GLN) AMIDOTRANSFERASE SUBUNIT A"/>
    <property type="match status" value="1"/>
</dbReference>
<dbReference type="PANTHER" id="PTHR11895">
    <property type="entry name" value="TRANSAMIDASE"/>
    <property type="match status" value="1"/>
</dbReference>
<dbReference type="Pfam" id="PF01425">
    <property type="entry name" value="Amidase"/>
    <property type="match status" value="1"/>
</dbReference>
<dbReference type="SUPFAM" id="SSF75304">
    <property type="entry name" value="Amidase signature (AS) enzymes"/>
    <property type="match status" value="1"/>
</dbReference>
<dbReference type="PROSITE" id="PS00571">
    <property type="entry name" value="AMIDASES"/>
    <property type="match status" value="1"/>
</dbReference>
<sequence>MSYIKKLRARLDSGEISAVELTKEYLAKIKEQDKRINSVITLCEAEALKEAEDADAIISAGKQGLLTGIPILHKDLFCTKGIRTTAASKMLDNFVAPYDSTVTKNCKDQGMVTLGKLNMDEFAMGSTNEHSYYGAVSNPWDLERVPGGSSGGSAAAVAAGFAPISTGSDTGGSVRQPASFCGLTAMKPSYGSTSRFGMVAFASSFDQAGIFAHYAEDVAIMLDAIAGECEFDSTCVGVKENHFTQDLEKDISGKVIGVDESLIKDLPEQIQEAVLKTLDNFKKLGAEIKSVKVPDLKEALSTYYIITPAEAAANLARYDGIRYGYRNPEARDLDELYRKSRTDGFGAEVKRRIMIGNYVLASSQYDSYYNKAQQLRKVMTDQINQIFTQVDVIFMPASPSEAFKKGDKLDPVSAYLSDIYTIPANISGLPAIAFPIGFANNLPVGGQLMAKAFNDNILTQMVVQYQKHYGIEEFILEQARI</sequence>
<feature type="chain" id="PRO_1000015832" description="Glutamyl-tRNA(Gln) amidotransferase subunit A">
    <location>
        <begin position="1"/>
        <end position="481"/>
    </location>
</feature>
<feature type="active site" description="Charge relay system" evidence="1">
    <location>
        <position position="74"/>
    </location>
</feature>
<feature type="active site" description="Charge relay system" evidence="1">
    <location>
        <position position="149"/>
    </location>
</feature>
<feature type="active site" description="Acyl-ester intermediate" evidence="1">
    <location>
        <position position="173"/>
    </location>
</feature>
<comment type="function">
    <text evidence="1">Allows the formation of correctly charged Gln-tRNA(Gln) through the transamidation of misacylated Glu-tRNA(Gln) in organisms which lack glutaminyl-tRNA synthetase. The reaction takes place in the presence of glutamine and ATP through an activated gamma-phospho-Glu-tRNA(Gln).</text>
</comment>
<comment type="catalytic activity">
    <reaction evidence="1">
        <text>L-glutamyl-tRNA(Gln) + L-glutamine + ATP + H2O = L-glutaminyl-tRNA(Gln) + L-glutamate + ADP + phosphate + H(+)</text>
        <dbReference type="Rhea" id="RHEA:17521"/>
        <dbReference type="Rhea" id="RHEA-COMP:9681"/>
        <dbReference type="Rhea" id="RHEA-COMP:9684"/>
        <dbReference type="ChEBI" id="CHEBI:15377"/>
        <dbReference type="ChEBI" id="CHEBI:15378"/>
        <dbReference type="ChEBI" id="CHEBI:29985"/>
        <dbReference type="ChEBI" id="CHEBI:30616"/>
        <dbReference type="ChEBI" id="CHEBI:43474"/>
        <dbReference type="ChEBI" id="CHEBI:58359"/>
        <dbReference type="ChEBI" id="CHEBI:78520"/>
        <dbReference type="ChEBI" id="CHEBI:78521"/>
        <dbReference type="ChEBI" id="CHEBI:456216"/>
        <dbReference type="EC" id="6.3.5.7"/>
    </reaction>
</comment>
<comment type="subunit">
    <text evidence="1">Heterotrimer of A, B and C subunits.</text>
</comment>
<comment type="similarity">
    <text evidence="1">Belongs to the amidase family. GatA subfamily.</text>
</comment>
<organism>
    <name type="scientific">Francisella tularensis subsp. novicida (strain U112)</name>
    <dbReference type="NCBI Taxonomy" id="401614"/>
    <lineage>
        <taxon>Bacteria</taxon>
        <taxon>Pseudomonadati</taxon>
        <taxon>Pseudomonadota</taxon>
        <taxon>Gammaproteobacteria</taxon>
        <taxon>Thiotrichales</taxon>
        <taxon>Francisellaceae</taxon>
        <taxon>Francisella</taxon>
    </lineage>
</organism>
<proteinExistence type="inferred from homology"/>
<protein>
    <recommendedName>
        <fullName evidence="1">Glutamyl-tRNA(Gln) amidotransferase subunit A</fullName>
        <shortName evidence="1">Glu-ADT subunit A</shortName>
        <ecNumber evidence="1">6.3.5.7</ecNumber>
    </recommendedName>
</protein>
<reference key="1">
    <citation type="journal article" date="2007" name="Genome Biol.">
        <title>Comparison of Francisella tularensis genomes reveals evolutionary events associated with the emergence of human pathogenic strains.</title>
        <authorList>
            <person name="Rohmer L."/>
            <person name="Fong C."/>
            <person name="Abmayr S."/>
            <person name="Wasnick M."/>
            <person name="Larson Freeman T.J."/>
            <person name="Radey M."/>
            <person name="Guina T."/>
            <person name="Svensson K."/>
            <person name="Hayden H.S."/>
            <person name="Jacobs M."/>
            <person name="Gallagher L.A."/>
            <person name="Manoil C."/>
            <person name="Ernst R.K."/>
            <person name="Drees B."/>
            <person name="Buckley D."/>
            <person name="Haugen E."/>
            <person name="Bovee D."/>
            <person name="Zhou Y."/>
            <person name="Chang J."/>
            <person name="Levy R."/>
            <person name="Lim R."/>
            <person name="Gillett W."/>
            <person name="Guenthener D."/>
            <person name="Kang A."/>
            <person name="Shaffer S.A."/>
            <person name="Taylor G."/>
            <person name="Chen J."/>
            <person name="Gallis B."/>
            <person name="D'Argenio D.A."/>
            <person name="Forsman M."/>
            <person name="Olson M.V."/>
            <person name="Goodlett D.R."/>
            <person name="Kaul R."/>
            <person name="Miller S.I."/>
            <person name="Brittnacher M.J."/>
        </authorList>
    </citation>
    <scope>NUCLEOTIDE SEQUENCE [LARGE SCALE GENOMIC DNA]</scope>
    <source>
        <strain>U112</strain>
    </source>
</reference>
<accession>A0Q8I2</accession>
<keyword id="KW-0067">ATP-binding</keyword>
<keyword id="KW-0436">Ligase</keyword>
<keyword id="KW-0547">Nucleotide-binding</keyword>
<keyword id="KW-0648">Protein biosynthesis</keyword>
<gene>
    <name evidence="1" type="primary">gatA</name>
    <name type="ordered locus">FTN_1690</name>
</gene>